<keyword id="KW-0203">Cytokinin biosynthesis</keyword>
<keyword id="KW-0932">Cytokinin signaling pathway</keyword>
<keyword id="KW-0963">Cytoplasm</keyword>
<keyword id="KW-0539">Nucleus</keyword>
<keyword id="KW-1185">Reference proteome</keyword>
<proteinExistence type="evidence at transcript level"/>
<feature type="chain" id="PRO_0000450252" description="Protein SOB FIVE-LIKE 4">
    <location>
        <begin position="1"/>
        <end position="131"/>
    </location>
</feature>
<feature type="region of interest" description="Disordered" evidence="4">
    <location>
        <begin position="1"/>
        <end position="21"/>
    </location>
</feature>
<feature type="region of interest" description="Disordered" evidence="4">
    <location>
        <begin position="40"/>
        <end position="131"/>
    </location>
</feature>
<feature type="short sequence motif" description="SOFL-A" evidence="8">
    <location>
        <begin position="11"/>
        <end position="16"/>
    </location>
</feature>
<feature type="short sequence motif" description="SOFL-B" evidence="8">
    <location>
        <begin position="60"/>
        <end position="69"/>
    </location>
</feature>
<feature type="short sequence motif" description="Nuclear localization signal" evidence="3">
    <location>
        <begin position="107"/>
        <end position="114"/>
    </location>
</feature>
<feature type="compositionally biased region" description="Polar residues" evidence="4">
    <location>
        <begin position="8"/>
        <end position="18"/>
    </location>
</feature>
<feature type="compositionally biased region" description="Basic and acidic residues" evidence="4">
    <location>
        <begin position="46"/>
        <end position="58"/>
    </location>
</feature>
<feature type="compositionally biased region" description="Basic and acidic residues" evidence="4">
    <location>
        <begin position="79"/>
        <end position="109"/>
    </location>
</feature>
<feature type="compositionally biased region" description="Basic residues" evidence="4">
    <location>
        <begin position="114"/>
        <end position="131"/>
    </location>
</feature>
<evidence type="ECO:0000250" key="1">
    <source>
        <dbReference type="UniProtKB" id="Q67YG7"/>
    </source>
</evidence>
<evidence type="ECO:0000250" key="2">
    <source>
        <dbReference type="UniProtKB" id="Q9CA45"/>
    </source>
</evidence>
<evidence type="ECO:0000255" key="3">
    <source>
        <dbReference type="PROSITE-ProRule" id="PRU00768"/>
    </source>
</evidence>
<evidence type="ECO:0000256" key="4">
    <source>
        <dbReference type="SAM" id="MobiDB-lite"/>
    </source>
</evidence>
<evidence type="ECO:0000269" key="5">
    <source>
    </source>
</evidence>
<evidence type="ECO:0000303" key="6">
    <source>
    </source>
</evidence>
<evidence type="ECO:0000305" key="7"/>
<evidence type="ECO:0000305" key="8">
    <source>
    </source>
</evidence>
<evidence type="ECO:0000312" key="9">
    <source>
        <dbReference type="Araport" id="AT5G38790"/>
    </source>
</evidence>
<evidence type="ECO:0000312" key="10">
    <source>
        <dbReference type="EMBL" id="BAB10135.1"/>
    </source>
</evidence>
<dbReference type="EMBL" id="AB011478">
    <property type="protein sequence ID" value="BAB10135.1"/>
    <property type="molecule type" value="Genomic_DNA"/>
</dbReference>
<dbReference type="EMBL" id="CP002688">
    <property type="protein sequence ID" value="AED94360.1"/>
    <property type="molecule type" value="Genomic_DNA"/>
</dbReference>
<dbReference type="RefSeq" id="NP_198695.1">
    <property type="nucleotide sequence ID" value="NM_123240.2"/>
</dbReference>
<dbReference type="STRING" id="3702.Q9FKQ9"/>
<dbReference type="PaxDb" id="3702-AT5G38790.1"/>
<dbReference type="EnsemblPlants" id="AT5G38790.1">
    <property type="protein sequence ID" value="AT5G38790.1"/>
    <property type="gene ID" value="AT5G38790"/>
</dbReference>
<dbReference type="GeneID" id="833870"/>
<dbReference type="Gramene" id="AT5G38790.1">
    <property type="protein sequence ID" value="AT5G38790.1"/>
    <property type="gene ID" value="AT5G38790"/>
</dbReference>
<dbReference type="KEGG" id="ath:AT5G38790"/>
<dbReference type="Araport" id="AT5G38790"/>
<dbReference type="TAIR" id="AT5G38790"/>
<dbReference type="eggNOG" id="ENOG502S95J">
    <property type="taxonomic scope" value="Eukaryota"/>
</dbReference>
<dbReference type="HOGENOM" id="CLU_111434_1_0_1"/>
<dbReference type="InParanoid" id="Q9FKQ9"/>
<dbReference type="OMA" id="YEGYNIY"/>
<dbReference type="PhylomeDB" id="Q9FKQ9"/>
<dbReference type="PRO" id="PR:Q9FKQ9"/>
<dbReference type="Proteomes" id="UP000006548">
    <property type="component" value="Chromosome 5"/>
</dbReference>
<dbReference type="ExpressionAtlas" id="Q9FKQ9">
    <property type="expression patterns" value="baseline and differential"/>
</dbReference>
<dbReference type="GO" id="GO:0005737">
    <property type="term" value="C:cytoplasm"/>
    <property type="evidence" value="ECO:0000250"/>
    <property type="project" value="UniProtKB"/>
</dbReference>
<dbReference type="GO" id="GO:0005634">
    <property type="term" value="C:nucleus"/>
    <property type="evidence" value="ECO:0000250"/>
    <property type="project" value="UniProtKB"/>
</dbReference>
<dbReference type="GO" id="GO:0009691">
    <property type="term" value="P:cytokinin biosynthetic process"/>
    <property type="evidence" value="ECO:0007669"/>
    <property type="project" value="UniProtKB-KW"/>
</dbReference>
<dbReference type="GO" id="GO:0009690">
    <property type="term" value="P:cytokinin metabolic process"/>
    <property type="evidence" value="ECO:0000250"/>
    <property type="project" value="UniProtKB"/>
</dbReference>
<dbReference type="GO" id="GO:0009736">
    <property type="term" value="P:cytokinin-activated signaling pathway"/>
    <property type="evidence" value="ECO:0000250"/>
    <property type="project" value="UniProtKB"/>
</dbReference>
<dbReference type="InterPro" id="IPR044670">
    <property type="entry name" value="SOFL"/>
</dbReference>
<dbReference type="PANTHER" id="PTHR33347">
    <property type="entry name" value="OSJNBA0091C07.3 PROTEIN"/>
    <property type="match status" value="1"/>
</dbReference>
<dbReference type="PANTHER" id="PTHR33347:SF27">
    <property type="entry name" value="PROTEIN SOB FIVE-LIKE 3-RELATED"/>
    <property type="match status" value="1"/>
</dbReference>
<accession>Q9FKQ9</accession>
<organism>
    <name type="scientific">Arabidopsis thaliana</name>
    <name type="common">Mouse-ear cress</name>
    <dbReference type="NCBI Taxonomy" id="3702"/>
    <lineage>
        <taxon>Eukaryota</taxon>
        <taxon>Viridiplantae</taxon>
        <taxon>Streptophyta</taxon>
        <taxon>Embryophyta</taxon>
        <taxon>Tracheophyta</taxon>
        <taxon>Spermatophyta</taxon>
        <taxon>Magnoliopsida</taxon>
        <taxon>eudicotyledons</taxon>
        <taxon>Gunneridae</taxon>
        <taxon>Pentapetalae</taxon>
        <taxon>rosids</taxon>
        <taxon>malvids</taxon>
        <taxon>Brassicales</taxon>
        <taxon>Brassicaceae</taxon>
        <taxon>Camelineae</taxon>
        <taxon>Arabidopsis</taxon>
    </lineage>
</organism>
<name>SOFL4_ARATH</name>
<reference key="1">
    <citation type="journal article" date="1998" name="DNA Res.">
        <title>Structural analysis of Arabidopsis thaliana chromosome 5. V. Sequence features of the regions of 1,381,565 bp covered by twenty one physically assigned P1 and TAC clones.</title>
        <authorList>
            <person name="Kaneko T."/>
            <person name="Kotani H."/>
            <person name="Nakamura Y."/>
            <person name="Sato S."/>
            <person name="Asamizu E."/>
            <person name="Miyajima N."/>
            <person name="Tabata S."/>
        </authorList>
    </citation>
    <scope>NUCLEOTIDE SEQUENCE [LARGE SCALE GENOMIC DNA]</scope>
    <source>
        <strain>cv. Columbia</strain>
    </source>
</reference>
<reference key="2">
    <citation type="journal article" date="2017" name="Plant J.">
        <title>Araport11: a complete reannotation of the Arabidopsis thaliana reference genome.</title>
        <authorList>
            <person name="Cheng C.Y."/>
            <person name="Krishnakumar V."/>
            <person name="Chan A.P."/>
            <person name="Thibaud-Nissen F."/>
            <person name="Schobel S."/>
            <person name="Town C.D."/>
        </authorList>
    </citation>
    <scope>GENOME REANNOTATION</scope>
    <source>
        <strain>cv. Columbia</strain>
    </source>
</reference>
<reference key="3">
    <citation type="journal article" date="2018" name="G3 (Bethesda)">
        <title>Synopsis of the SOFL plant-specific gene family.</title>
        <authorList>
            <person name="Tayengwa R."/>
            <person name="Zhao J."/>
            <person name="Pierce C.F."/>
            <person name="Werner B.E."/>
            <person name="Neff M.M."/>
        </authorList>
    </citation>
    <scope>TISSUE SPECIFICITY</scope>
    <scope>GENE FAMILY</scope>
    <scope>NOMENCLATURE</scope>
    <source>
        <strain>cv. Columbia</strain>
    </source>
</reference>
<protein>
    <recommendedName>
        <fullName evidence="6">Protein SOB FIVE-LIKE 4</fullName>
        <shortName evidence="6">AtSOFL4</shortName>
    </recommendedName>
</protein>
<gene>
    <name evidence="6" type="primary">SOFL4</name>
    <name evidence="9" type="ordered locus">At5g38790</name>
    <name evidence="10" type="ORF">MKD10.11</name>
</gene>
<comment type="function">
    <text evidence="1">Involved in cytokinin-mediated development.</text>
</comment>
<comment type="subcellular location">
    <subcellularLocation>
        <location evidence="1">Cytoplasm</location>
    </subcellularLocation>
    <subcellularLocation>
        <location evidence="3">Nucleus</location>
    </subcellularLocation>
</comment>
<comment type="tissue specificity">
    <text evidence="5">Expressed, at low levels, in seedlings, roots, flowers and siliques.</text>
</comment>
<comment type="domain">
    <text evidence="2">Domains SOFL-A and SOFL-B are required for function in cytokinin-mediated development.</text>
</comment>
<comment type="similarity">
    <text evidence="7">Belongs to the SOFL plant protein family.</text>
</comment>
<sequence length="131" mass="15396">MDKEECSSSESGWTTYLSSPIKVDEDEVVDEDYYYEGYNIYNYSSKVEHEEERNKDSDDSMASDASSGPNYQRFHQKNKALDLKNGKNEGNSKSKNDDDHHNHYHDGKKTSNSYRKKDKKKRENKSTYRMK</sequence>